<evidence type="ECO:0000255" key="1">
    <source>
        <dbReference type="HAMAP-Rule" id="MF_01266"/>
    </source>
</evidence>
<reference key="1">
    <citation type="submission" date="2008-02" db="EMBL/GenBank/DDBJ databases">
        <title>Complete sequence of Escherichia coli C str. ATCC 8739.</title>
        <authorList>
            <person name="Copeland A."/>
            <person name="Lucas S."/>
            <person name="Lapidus A."/>
            <person name="Glavina del Rio T."/>
            <person name="Dalin E."/>
            <person name="Tice H."/>
            <person name="Bruce D."/>
            <person name="Goodwin L."/>
            <person name="Pitluck S."/>
            <person name="Kiss H."/>
            <person name="Brettin T."/>
            <person name="Detter J.C."/>
            <person name="Han C."/>
            <person name="Kuske C.R."/>
            <person name="Schmutz J."/>
            <person name="Larimer F."/>
            <person name="Land M."/>
            <person name="Hauser L."/>
            <person name="Kyrpides N."/>
            <person name="Mikhailova N."/>
            <person name="Ingram L."/>
            <person name="Richardson P."/>
        </authorList>
    </citation>
    <scope>NUCLEOTIDE SEQUENCE [LARGE SCALE GENOMIC DNA]</scope>
    <source>
        <strain>ATCC 8739 / DSM 1576 / NBRC 3972 / NCIMB 8545 / WDCM 00012 / Crooks</strain>
    </source>
</reference>
<dbReference type="EC" id="3.1.1.-" evidence="1"/>
<dbReference type="EMBL" id="CP000946">
    <property type="protein sequence ID" value="ACA79425.1"/>
    <property type="molecule type" value="Genomic_DNA"/>
</dbReference>
<dbReference type="RefSeq" id="WP_001295191.1">
    <property type="nucleotide sequence ID" value="NZ_MTFT01000012.1"/>
</dbReference>
<dbReference type="SMR" id="B1IT14"/>
<dbReference type="GeneID" id="93777632"/>
<dbReference type="KEGG" id="ecl:EcolC_3821"/>
<dbReference type="HOGENOM" id="CLU_074775_0_0_6"/>
<dbReference type="UniPathway" id="UPA00263">
    <property type="reaction ID" value="UER00377"/>
</dbReference>
<dbReference type="GO" id="GO:0005737">
    <property type="term" value="C:cytoplasm"/>
    <property type="evidence" value="ECO:0007669"/>
    <property type="project" value="UniProtKB-SubCell"/>
</dbReference>
<dbReference type="GO" id="GO:0035460">
    <property type="term" value="F:L-ascorbate 6-phosphate lactonase activity"/>
    <property type="evidence" value="ECO:0007669"/>
    <property type="project" value="InterPro"/>
</dbReference>
<dbReference type="GO" id="GO:0030145">
    <property type="term" value="F:manganese ion binding"/>
    <property type="evidence" value="ECO:0007669"/>
    <property type="project" value="InterPro"/>
</dbReference>
<dbReference type="GO" id="GO:0019854">
    <property type="term" value="P:L-ascorbic acid catabolic process"/>
    <property type="evidence" value="ECO:0007669"/>
    <property type="project" value="UniProtKB-UniRule"/>
</dbReference>
<dbReference type="CDD" id="cd16284">
    <property type="entry name" value="UlaG-like_MBL-fold"/>
    <property type="match status" value="1"/>
</dbReference>
<dbReference type="FunFam" id="3.60.15.10:FF:000004">
    <property type="entry name" value="Probable L-ascorbate-6-phosphate lactonase UlaG"/>
    <property type="match status" value="1"/>
</dbReference>
<dbReference type="Gene3D" id="3.60.15.10">
    <property type="entry name" value="Ribonuclease Z/Hydroxyacylglutathione hydrolase-like"/>
    <property type="match status" value="1"/>
</dbReference>
<dbReference type="HAMAP" id="MF_01266">
    <property type="entry name" value="UlaG"/>
    <property type="match status" value="1"/>
</dbReference>
<dbReference type="InterPro" id="IPR023951">
    <property type="entry name" value="L-ascorbate_6P_UlaG"/>
</dbReference>
<dbReference type="InterPro" id="IPR001279">
    <property type="entry name" value="Metallo-B-lactamas"/>
</dbReference>
<dbReference type="InterPro" id="IPR036866">
    <property type="entry name" value="RibonucZ/Hydroxyglut_hydro"/>
</dbReference>
<dbReference type="InterPro" id="IPR048021">
    <property type="entry name" value="UlaG-like_MBL-fold"/>
</dbReference>
<dbReference type="InterPro" id="IPR050114">
    <property type="entry name" value="UPF0173_UPF0282_UlaG_hydrolase"/>
</dbReference>
<dbReference type="NCBIfam" id="NF008688">
    <property type="entry name" value="PRK11709.1"/>
    <property type="match status" value="1"/>
</dbReference>
<dbReference type="PANTHER" id="PTHR43546:SF9">
    <property type="entry name" value="L-ASCORBATE-6-PHOSPHATE LACTONASE ULAG-RELATED"/>
    <property type="match status" value="1"/>
</dbReference>
<dbReference type="PANTHER" id="PTHR43546">
    <property type="entry name" value="UPF0173 METAL-DEPENDENT HYDROLASE MJ1163-RELATED"/>
    <property type="match status" value="1"/>
</dbReference>
<dbReference type="Pfam" id="PF12706">
    <property type="entry name" value="Lactamase_B_2"/>
    <property type="match status" value="1"/>
</dbReference>
<dbReference type="SUPFAM" id="SSF56281">
    <property type="entry name" value="Metallo-hydrolase/oxidoreductase"/>
    <property type="match status" value="1"/>
</dbReference>
<feature type="chain" id="PRO_1000085824" description="Probable L-ascorbate-6-phosphate lactonase UlaG">
    <location>
        <begin position="1"/>
        <end position="354"/>
    </location>
</feature>
<name>ULAG_ECOLC</name>
<sequence>MSKVKSITRESWILSTFPEWGSWLNEEIEQEQVAPGTFAMWWLGCTGIWLKSEGGTNVCVDFWCGTGKQSHGNPLMKQGHQMQRMAGVKKLQPNLRTTPFVLDPFAIRQIDAVLATHDHNDHIDVNVAAAVMQNCADDVPFIGPKTCVDLWIGWGVPKERCIVVKPGDVVKVKDIEIHALDAFDRTALITLPADQKAAGVLPDGMDDRAVNYLFKTPGGSLYHSGDSHYSNYYAKHGNEHQIDVALGSYGENPRGITDKMTSADMLRMGEALNAKVVIPFHHDIWSNFQADPQEIRVLWEMKKDRLKYGFKPFIWQVGGKFTWPLDKDNFEYHYPRGFDDCFTIEPDLPFKSFL</sequence>
<proteinExistence type="inferred from homology"/>
<accession>B1IT14</accession>
<comment type="function">
    <text evidence="1">Probably catalyzes the hydrolysis of L-ascorbate-6-P into 3-keto-L-gulonate-6-P. Is essential for L-ascorbate utilization under anaerobic conditions.</text>
</comment>
<comment type="catalytic activity">
    <reaction evidence="1">
        <text>L-ascorbate 6-phosphate + H2O = 3-dehydro-L-gulonate 6-phosphate</text>
        <dbReference type="Rhea" id="RHEA:28803"/>
        <dbReference type="ChEBI" id="CHEBI:15377"/>
        <dbReference type="ChEBI" id="CHEBI:58774"/>
        <dbReference type="ChEBI" id="CHEBI:61698"/>
    </reaction>
</comment>
<comment type="cofactor">
    <cofactor evidence="1">
        <name>a divalent metal cation</name>
        <dbReference type="ChEBI" id="CHEBI:60240"/>
    </cofactor>
</comment>
<comment type="pathway">
    <text evidence="1">Cofactor degradation; L-ascorbate degradation; D-xylulose 5-phosphate from L-ascorbate: step 1/4.</text>
</comment>
<comment type="subcellular location">
    <subcellularLocation>
        <location evidence="1">Cytoplasm</location>
    </subcellularLocation>
</comment>
<comment type="induction">
    <text evidence="1">Induced by L-ascorbate. Repressed by UlaR.</text>
</comment>
<comment type="similarity">
    <text evidence="1">Belongs to the UlaG family.</text>
</comment>
<gene>
    <name evidence="1" type="primary">ulaG</name>
    <name type="ordered locus">EcolC_3821</name>
</gene>
<keyword id="KW-0963">Cytoplasm</keyword>
<keyword id="KW-0378">Hydrolase</keyword>
<protein>
    <recommendedName>
        <fullName evidence="1">Probable L-ascorbate-6-phosphate lactonase UlaG</fullName>
        <ecNumber evidence="1">3.1.1.-</ecNumber>
    </recommendedName>
    <alternativeName>
        <fullName evidence="1">L-ascorbate utilization protein G</fullName>
    </alternativeName>
</protein>
<organism>
    <name type="scientific">Escherichia coli (strain ATCC 8739 / DSM 1576 / NBRC 3972 / NCIMB 8545 / WDCM 00012 / Crooks)</name>
    <dbReference type="NCBI Taxonomy" id="481805"/>
    <lineage>
        <taxon>Bacteria</taxon>
        <taxon>Pseudomonadati</taxon>
        <taxon>Pseudomonadota</taxon>
        <taxon>Gammaproteobacteria</taxon>
        <taxon>Enterobacterales</taxon>
        <taxon>Enterobacteriaceae</taxon>
        <taxon>Escherichia</taxon>
    </lineage>
</organism>